<accession>Q55585</accession>
<name>GABD_SYNY3</name>
<gene>
    <name type="primary">gabD</name>
    <name type="ordered locus">slr0370</name>
</gene>
<proteinExistence type="inferred from homology"/>
<reference key="1">
    <citation type="journal article" date="1995" name="DNA Res.">
        <title>Sequence analysis of the genome of the unicellular cyanobacterium Synechocystis sp. strain PCC6803. I. Sequence features in the 1 Mb region from map positions 64% to 92% of the genome.</title>
        <authorList>
            <person name="Kaneko T."/>
            <person name="Tanaka A."/>
            <person name="Sato S."/>
            <person name="Kotani H."/>
            <person name="Sazuka T."/>
            <person name="Miyajima N."/>
            <person name="Sugiura M."/>
            <person name="Tabata S."/>
        </authorList>
    </citation>
    <scope>NUCLEOTIDE SEQUENCE [LARGE SCALE GENOMIC DNA]</scope>
    <source>
        <strain>ATCC 27184 / PCC 6803 / N-1</strain>
    </source>
</reference>
<reference key="2">
    <citation type="journal article" date="1996" name="DNA Res.">
        <title>Sequence analysis of the genome of the unicellular cyanobacterium Synechocystis sp. strain PCC6803. II. Sequence determination of the entire genome and assignment of potential protein-coding regions.</title>
        <authorList>
            <person name="Kaneko T."/>
            <person name="Sato S."/>
            <person name="Kotani H."/>
            <person name="Tanaka A."/>
            <person name="Asamizu E."/>
            <person name="Nakamura Y."/>
            <person name="Miyajima N."/>
            <person name="Hirosawa M."/>
            <person name="Sugiura M."/>
            <person name="Sasamoto S."/>
            <person name="Kimura T."/>
            <person name="Hosouchi T."/>
            <person name="Matsuno A."/>
            <person name="Muraki A."/>
            <person name="Nakazaki N."/>
            <person name="Naruo K."/>
            <person name="Okumura S."/>
            <person name="Shimpo S."/>
            <person name="Takeuchi C."/>
            <person name="Wada T."/>
            <person name="Watanabe A."/>
            <person name="Yamada M."/>
            <person name="Yasuda M."/>
            <person name="Tabata S."/>
        </authorList>
    </citation>
    <scope>NUCLEOTIDE SEQUENCE [LARGE SCALE GENOMIC DNA]</scope>
    <source>
        <strain>ATCC 27184 / PCC 6803 / Kazusa</strain>
    </source>
</reference>
<feature type="chain" id="PRO_0000056574" description="Probable succinate-semialdehyde dehydrogenase [NADP(+)]">
    <location>
        <begin position="1"/>
        <end position="454"/>
    </location>
</feature>
<feature type="active site" description="Proton acceptor" evidence="1">
    <location>
        <position position="228"/>
    </location>
</feature>
<feature type="active site" description="Nucleophile" evidence="1">
    <location>
        <position position="262"/>
    </location>
</feature>
<feature type="binding site" evidence="1">
    <location>
        <begin position="130"/>
        <end position="131"/>
    </location>
    <ligand>
        <name>NADP(+)</name>
        <dbReference type="ChEBI" id="CHEBI:58349"/>
    </ligand>
</feature>
<feature type="binding site" evidence="1">
    <location>
        <begin position="154"/>
        <end position="157"/>
    </location>
    <ligand>
        <name>NADP(+)</name>
        <dbReference type="ChEBI" id="CHEBI:58349"/>
    </ligand>
</feature>
<feature type="binding site" evidence="1">
    <location>
        <begin position="206"/>
        <end position="207"/>
    </location>
    <ligand>
        <name>NADP(+)</name>
        <dbReference type="ChEBI" id="CHEBI:58349"/>
    </ligand>
</feature>
<feature type="binding site" evidence="1">
    <location>
        <position position="229"/>
    </location>
    <ligand>
        <name>NADP(+)</name>
        <dbReference type="ChEBI" id="CHEBI:58349"/>
    </ligand>
</feature>
<feature type="binding site" evidence="1">
    <location>
        <position position="359"/>
    </location>
    <ligand>
        <name>NADP(+)</name>
        <dbReference type="ChEBI" id="CHEBI:58349"/>
    </ligand>
</feature>
<sequence>MAIATINPATGQTVQTFIAHSQVEVNAKLDLAQETFQSFRHLPFAQRGQWLRKAADILEQRRDEWAALMTLEMGKSIPQAIAEVNKCALVCRFYADKAEEYLADEVVTTDASQSFIAYQPLGVILAVMPWNFPFWQVFRFAAPALMAGNVGLLKHASNVPQCALAIAEIFQTAGFPEGAFQTLLIGGKVASELMADDRIQAGTLTGSEPAGASFASAAAGQIKKTVLELGGSDPFIVLEDADLDQALKVAVPARMQNNGQSCIAAKRFIVQASVAEEFFQRLTKAFQALKVGDPSLSTTDIGPLATPDILADIVAQVEQTIAAGAHCRCGGQALDQPGNYYPPTLLTDVPPNAPTYRQEFFGPVALGFTVDNLEEAIALANDIPFGLGASAWTTNPENQQKLIRGIEAGAVFINGMTKSDPRIPFGGIKRSGFGRELGRMGILEFVNAKTVWIA</sequence>
<comment type="function">
    <text evidence="1">Catalyzes the NADP(+) dependent oxidation of succinate semialdehyde to succinate.</text>
</comment>
<comment type="catalytic activity">
    <reaction>
        <text>succinate semialdehyde + NADP(+) + H2O = succinate + NADPH + 2 H(+)</text>
        <dbReference type="Rhea" id="RHEA:13213"/>
        <dbReference type="ChEBI" id="CHEBI:15377"/>
        <dbReference type="ChEBI" id="CHEBI:15378"/>
        <dbReference type="ChEBI" id="CHEBI:30031"/>
        <dbReference type="ChEBI" id="CHEBI:57706"/>
        <dbReference type="ChEBI" id="CHEBI:57783"/>
        <dbReference type="ChEBI" id="CHEBI:58349"/>
        <dbReference type="EC" id="1.2.1.79"/>
    </reaction>
</comment>
<comment type="pathway">
    <text>Amino-acid degradation; 4-aminobutanoate degradation.</text>
</comment>
<comment type="similarity">
    <text evidence="2">Belongs to the aldehyde dehydrogenase family.</text>
</comment>
<evidence type="ECO:0000250" key="1"/>
<evidence type="ECO:0000305" key="2"/>
<protein>
    <recommendedName>
        <fullName>Probable succinate-semialdehyde dehydrogenase [NADP(+)]</fullName>
        <shortName>SSDH</shortName>
        <ecNumber>1.2.1.79</ecNumber>
    </recommendedName>
</protein>
<keyword id="KW-0521">NADP</keyword>
<keyword id="KW-0560">Oxidoreductase</keyword>
<keyword id="KW-1185">Reference proteome</keyword>
<dbReference type="EC" id="1.2.1.79"/>
<dbReference type="EMBL" id="BA000022">
    <property type="protein sequence ID" value="BAA10090.1"/>
    <property type="molecule type" value="Genomic_DNA"/>
</dbReference>
<dbReference type="PIR" id="S76112">
    <property type="entry name" value="S76112"/>
</dbReference>
<dbReference type="SMR" id="Q55585"/>
<dbReference type="FunCoup" id="Q55585">
    <property type="interactions" value="459"/>
</dbReference>
<dbReference type="IntAct" id="Q55585">
    <property type="interactions" value="2"/>
</dbReference>
<dbReference type="STRING" id="1148.gene:10499582"/>
<dbReference type="PaxDb" id="1148-1001464"/>
<dbReference type="EnsemblBacteria" id="BAA10090">
    <property type="protein sequence ID" value="BAA10090"/>
    <property type="gene ID" value="BAA10090"/>
</dbReference>
<dbReference type="KEGG" id="syn:slr0370"/>
<dbReference type="eggNOG" id="COG1012">
    <property type="taxonomic scope" value="Bacteria"/>
</dbReference>
<dbReference type="InParanoid" id="Q55585"/>
<dbReference type="PhylomeDB" id="Q55585"/>
<dbReference type="BioCyc" id="MetaCyc:SGL_RS12900-MONOMER"/>
<dbReference type="UniPathway" id="UPA00733"/>
<dbReference type="Proteomes" id="UP000001425">
    <property type="component" value="Chromosome"/>
</dbReference>
<dbReference type="GO" id="GO:0004030">
    <property type="term" value="F:aldehyde dehydrogenase [NAD(P)+] activity"/>
    <property type="evidence" value="ECO:0007669"/>
    <property type="project" value="InterPro"/>
</dbReference>
<dbReference type="GO" id="GO:0004777">
    <property type="term" value="F:succinate-semialdehyde dehydrogenase (NAD+) activity"/>
    <property type="evidence" value="ECO:0000318"/>
    <property type="project" value="GO_Central"/>
</dbReference>
<dbReference type="GO" id="GO:0036243">
    <property type="term" value="F:succinate-semialdehyde dehydrogenase (NADP+) activity"/>
    <property type="evidence" value="ECO:0007669"/>
    <property type="project" value="UniProtKB-EC"/>
</dbReference>
<dbReference type="GO" id="GO:0009450">
    <property type="term" value="P:gamma-aminobutyric acid catabolic process"/>
    <property type="evidence" value="ECO:0007669"/>
    <property type="project" value="UniProtKB-UniPathway"/>
</dbReference>
<dbReference type="CDD" id="cd07100">
    <property type="entry name" value="ALDH_SSADH1_GabD1"/>
    <property type="match status" value="1"/>
</dbReference>
<dbReference type="FunFam" id="3.40.309.10:FF:000010">
    <property type="entry name" value="Gamma-aminobutyraldehyde dehydrogenase"/>
    <property type="match status" value="1"/>
</dbReference>
<dbReference type="FunFam" id="3.40.605.10:FF:000012">
    <property type="entry name" value="NAD-dependent succinate-semialdehyde dehydrogenase"/>
    <property type="match status" value="1"/>
</dbReference>
<dbReference type="Gene3D" id="3.40.605.10">
    <property type="entry name" value="Aldehyde Dehydrogenase, Chain A, domain 1"/>
    <property type="match status" value="1"/>
</dbReference>
<dbReference type="Gene3D" id="3.40.309.10">
    <property type="entry name" value="Aldehyde Dehydrogenase, Chain A, domain 2"/>
    <property type="match status" value="1"/>
</dbReference>
<dbReference type="InterPro" id="IPR016161">
    <property type="entry name" value="Ald_DH/histidinol_DH"/>
</dbReference>
<dbReference type="InterPro" id="IPR016163">
    <property type="entry name" value="Ald_DH_C"/>
</dbReference>
<dbReference type="InterPro" id="IPR016162">
    <property type="entry name" value="Ald_DH_N"/>
</dbReference>
<dbReference type="InterPro" id="IPR015590">
    <property type="entry name" value="Aldehyde_DH_dom"/>
</dbReference>
<dbReference type="InterPro" id="IPR044148">
    <property type="entry name" value="ALDH_GabD1-like"/>
</dbReference>
<dbReference type="InterPro" id="IPR047110">
    <property type="entry name" value="GABD/Sad-like"/>
</dbReference>
<dbReference type="PANTHER" id="PTHR43217">
    <property type="entry name" value="SUCCINATE SEMIALDEHYDE DEHYDROGENASE [NAD(P)+] SAD"/>
    <property type="match status" value="1"/>
</dbReference>
<dbReference type="PANTHER" id="PTHR43217:SF1">
    <property type="entry name" value="SUCCINATE SEMIALDEHYDE DEHYDROGENASE [NAD(P)+] SAD"/>
    <property type="match status" value="1"/>
</dbReference>
<dbReference type="Pfam" id="PF00171">
    <property type="entry name" value="Aldedh"/>
    <property type="match status" value="1"/>
</dbReference>
<dbReference type="SUPFAM" id="SSF53720">
    <property type="entry name" value="ALDH-like"/>
    <property type="match status" value="1"/>
</dbReference>
<organism>
    <name type="scientific">Synechocystis sp. (strain ATCC 27184 / PCC 6803 / Kazusa)</name>
    <dbReference type="NCBI Taxonomy" id="1111708"/>
    <lineage>
        <taxon>Bacteria</taxon>
        <taxon>Bacillati</taxon>
        <taxon>Cyanobacteriota</taxon>
        <taxon>Cyanophyceae</taxon>
        <taxon>Synechococcales</taxon>
        <taxon>Merismopediaceae</taxon>
        <taxon>Synechocystis</taxon>
    </lineage>
</organism>